<evidence type="ECO:0000250" key="1">
    <source>
        <dbReference type="UniProtKB" id="P18066"/>
    </source>
</evidence>
<evidence type="ECO:0000250" key="2">
    <source>
        <dbReference type="UniProtKB" id="P20339"/>
    </source>
</evidence>
<evidence type="ECO:0000250" key="3">
    <source>
        <dbReference type="UniProtKB" id="Q0IIG7"/>
    </source>
</evidence>
<evidence type="ECO:0000250" key="4">
    <source>
        <dbReference type="UniProtKB" id="Q9CQD1"/>
    </source>
</evidence>
<evidence type="ECO:0000256" key="5">
    <source>
        <dbReference type="SAM" id="MobiDB-lite"/>
    </source>
</evidence>
<evidence type="ECO:0000305" key="6"/>
<name>RAB5A_MACFA</name>
<proteinExistence type="evidence at transcript level"/>
<accession>P61271</accession>
<reference key="1">
    <citation type="submission" date="2001-06" db="EMBL/GenBank/DDBJ databases">
        <title>Isolation of full-length cDNA clones from macaque brain cDNA libraries.</title>
        <authorList>
            <person name="Osada N."/>
            <person name="Hida M."/>
            <person name="Kusuda J."/>
            <person name="Tanuma R."/>
            <person name="Iseki K."/>
            <person name="Hirai M."/>
            <person name="Terao K."/>
            <person name="Suzuki Y."/>
            <person name="Sugano S."/>
            <person name="Hashimoto K."/>
        </authorList>
    </citation>
    <scope>NUCLEOTIDE SEQUENCE [LARGE SCALE MRNA]</scope>
    <source>
        <tissue>Medulla oblongata</tissue>
    </source>
</reference>
<organism>
    <name type="scientific">Macaca fascicularis</name>
    <name type="common">Crab-eating macaque</name>
    <name type="synonym">Cynomolgus monkey</name>
    <dbReference type="NCBI Taxonomy" id="9541"/>
    <lineage>
        <taxon>Eukaryota</taxon>
        <taxon>Metazoa</taxon>
        <taxon>Chordata</taxon>
        <taxon>Craniata</taxon>
        <taxon>Vertebrata</taxon>
        <taxon>Euteleostomi</taxon>
        <taxon>Mammalia</taxon>
        <taxon>Eutheria</taxon>
        <taxon>Euarchontoglires</taxon>
        <taxon>Primates</taxon>
        <taxon>Haplorrhini</taxon>
        <taxon>Catarrhini</taxon>
        <taxon>Cercopithecidae</taxon>
        <taxon>Cercopithecinae</taxon>
        <taxon>Macaca</taxon>
    </lineage>
</organism>
<keyword id="KW-1003">Cell membrane</keyword>
<keyword id="KW-0966">Cell projection</keyword>
<keyword id="KW-0963">Cytoplasm</keyword>
<keyword id="KW-0968">Cytoplasmic vesicle</keyword>
<keyword id="KW-0254">Endocytosis</keyword>
<keyword id="KW-0967">Endosome</keyword>
<keyword id="KW-0342">GTP-binding</keyword>
<keyword id="KW-0378">Hydrolase</keyword>
<keyword id="KW-0449">Lipoprotein</keyword>
<keyword id="KW-0460">Magnesium</keyword>
<keyword id="KW-0472">Membrane</keyword>
<keyword id="KW-0479">Metal-binding</keyword>
<keyword id="KW-0547">Nucleotide-binding</keyword>
<keyword id="KW-0581">Phagocytosis</keyword>
<keyword id="KW-0597">Phosphoprotein</keyword>
<keyword id="KW-0636">Prenylation</keyword>
<keyword id="KW-0653">Protein transport</keyword>
<keyword id="KW-1185">Reference proteome</keyword>
<keyword id="KW-0813">Transport</keyword>
<sequence length="215" mass="23659">MANRGATRPNGPNTGNKICQFKLVLLGESAVGKSSLVLRFVKGQFHEFQESTIGAAFLTQTVCLDDTTVKFEIWDTAGQERYHSLAPMYYRGAQAAIVVYDITNEESFARAKNWVKELQRQASPNIVIALSGNKADLANKRAVDFQEAQSYADDNSLLFMETSAKTSMNVNEIFMAIAKKLPKNEPQNPGANSARGRGVDLTEPTQPTRSQCCSN</sequence>
<gene>
    <name type="primary">RAB5A</name>
    <name type="ORF">QmoA-10711</name>
</gene>
<comment type="function">
    <text evidence="1 2 4">The small GTPases Rab are key regulators of intracellular membrane trafficking, from the formation of transport vesicles to their fusion with membranes. Rabs cycle between an inactive GDP-bound form and an active GTP-bound form that is able to recruit to membranes different sets of downstream effectors directly responsible for vesicle formation, movement, tethering and fusion. RAB5A is required for the fusion of plasma membranes and early endosomes. Contributes to the regulation of filopodia extension. Required for the exosomal release of SDCBP, CD63, PDCD6IP and syndecan. Regulates maturation of apoptotic cell-containing phagosomes, probably downstream of DYN2 and PIK3C3.</text>
</comment>
<comment type="catalytic activity">
    <reaction evidence="2">
        <text>GTP + H2O = GDP + phosphate + H(+)</text>
        <dbReference type="Rhea" id="RHEA:19669"/>
        <dbReference type="ChEBI" id="CHEBI:15377"/>
        <dbReference type="ChEBI" id="CHEBI:15378"/>
        <dbReference type="ChEBI" id="CHEBI:37565"/>
        <dbReference type="ChEBI" id="CHEBI:43474"/>
        <dbReference type="ChEBI" id="CHEBI:58189"/>
        <dbReference type="EC" id="3.6.5.2"/>
    </reaction>
    <physiologicalReaction direction="left-to-right" evidence="2">
        <dbReference type="Rhea" id="RHEA:19670"/>
    </physiologicalReaction>
</comment>
<comment type="cofactor">
    <cofactor evidence="2">
        <name>Mg(2+)</name>
        <dbReference type="ChEBI" id="CHEBI:18420"/>
    </cofactor>
</comment>
<comment type="activity regulation">
    <text evidence="1 6">Regulated by guanine nucleotide exchange factors (GEFs) including RINL, which promote the exchange of bound GDP for free GTP (By similarity). Regulated by GTPase activating proteins (GAPs) which increase the GTP hydrolysis activity (Probable). Inhibited by GDP dissociation inhibitors (GDIs) (Probable).</text>
</comment>
<comment type="subunit">
    <text evidence="1 2 3 4">Interacts with GDI1; this promotes dissociation from membranes; phosphorylation at Ser-84 disrupts this interaction (By similarity). Interacts with GDI2; phosphorylation at Ser-84 disrupts the interaction (By similarity). Interacts with SGSM1 and SGSM3 (By similarity). Interacts with PIK3CB. Interacts with EEA1. Interacts with RIN1 and GAPVD1, which regulate its pathway, probably by acting as a GEF. Interacts with RINL. Interacts with ALS2CL, SUN2, ZFYVE20 and RUFY1. Interacts with RABEP1; one RABEP1 homodimer binds two RAB5A chains, but at opposite sides of the dimer. Interacts with OCRL and INPP5F. May be a component of a complex composed of RAB5A, DYN2 and PIK3C3. Does not interact with the BLOC-3 complex (heterodimer of HPS1 and HPS4). Interacts with CLN5. Interacts with APPL2 (By similarity). Interacts with F8A1/F8A2/F8A3 (By similarity). Found in a complex with F8A1/F8A2/F8A3, HTT and RAB5A; mediates the recruitment of HTT by RAB5A onto early endosomes (By similarity). Interacts with ATP9A (By similarity). Interacts with PPP1R21; mediates the recruitment of FERRY complex by RAB5A onto early endosomes (By similarity).</text>
</comment>
<comment type="subcellular location">
    <subcellularLocation>
        <location evidence="2">Cell membrane</location>
        <topology evidence="2">Lipid-anchor</topology>
        <orientation evidence="1">Cytoplasmic side</orientation>
    </subcellularLocation>
    <subcellularLocation>
        <location evidence="2">Early endosome membrane</location>
        <topology evidence="2">Lipid-anchor</topology>
    </subcellularLocation>
    <subcellularLocation>
        <location evidence="2">Melanosome</location>
    </subcellularLocation>
    <subcellularLocation>
        <location evidence="2">Cytoplasmic vesicle</location>
    </subcellularLocation>
    <subcellularLocation>
        <location evidence="1">Cell projection</location>
        <location evidence="1">Ruffle</location>
    </subcellularLocation>
    <subcellularLocation>
        <location evidence="2">Membrane</location>
    </subcellularLocation>
    <subcellularLocation>
        <location evidence="2">Cytoplasm</location>
        <location evidence="2">Cytosol</location>
    </subcellularLocation>
    <subcellularLocation>
        <location evidence="4">Cytoplasmic vesicle</location>
        <location evidence="4">Phagosome membrane</location>
    </subcellularLocation>
    <subcellularLocation>
        <location evidence="2">Endosome membrane</location>
    </subcellularLocation>
    <text evidence="2">Enriched in stage I melanosomes. Alternates between membrane-bound and cytosolic forms.</text>
</comment>
<comment type="domain">
    <text evidence="2">Switch 1, switch 2 and the interswitch regions are characteristic of Rab GTPases and mediate the interactions with Rab downstream effectors. The switch regions undergo conformational changes upon nucleotide binding which drive interaction with specific sets of effector proteins, with most effectors only binding to GTP-bound Rab.</text>
</comment>
<comment type="PTM">
    <text evidence="2">Phosphorylation of Ser-84 in the switch II region by LRRK2 prevents the association of RAB regulatory proteins, including RAB GDP dissociation inhibitors GDI1 and GDI2.</text>
</comment>
<comment type="similarity">
    <text evidence="6">Belongs to the small GTPase superfamily. Rab family.</text>
</comment>
<dbReference type="EC" id="3.6.5.2" evidence="2"/>
<dbReference type="EMBL" id="AB062987">
    <property type="protein sequence ID" value="BAB60752.1"/>
    <property type="molecule type" value="mRNA"/>
</dbReference>
<dbReference type="RefSeq" id="NP_001270902.1">
    <property type="nucleotide sequence ID" value="NM_001283973.1"/>
</dbReference>
<dbReference type="RefSeq" id="XP_005545726.1">
    <property type="nucleotide sequence ID" value="XM_005545669.2"/>
</dbReference>
<dbReference type="RefSeq" id="XP_045242950.1">
    <property type="nucleotide sequence ID" value="XM_045387015.2"/>
</dbReference>
<dbReference type="RefSeq" id="XP_045242951.1">
    <property type="nucleotide sequence ID" value="XM_045387016.2"/>
</dbReference>
<dbReference type="SMR" id="P61271"/>
<dbReference type="STRING" id="9541.ENSMFAP00000005334"/>
<dbReference type="Ensembl" id="ENSMFAT00000024008.2">
    <property type="protein sequence ID" value="ENSMFAP00000005334.1"/>
    <property type="gene ID" value="ENSMFAG00000002326.2"/>
</dbReference>
<dbReference type="GeneID" id="102144117"/>
<dbReference type="VEuPathDB" id="HostDB:ENSMFAG00000002326"/>
<dbReference type="eggNOG" id="KOG0092">
    <property type="taxonomic scope" value="Eukaryota"/>
</dbReference>
<dbReference type="GeneTree" id="ENSGT00940000154337"/>
<dbReference type="OMA" id="GASFFRY"/>
<dbReference type="Proteomes" id="UP000233100">
    <property type="component" value="Chromosome 2"/>
</dbReference>
<dbReference type="Bgee" id="ENSMFAG00000002326">
    <property type="expression patterns" value="Expressed in temporal lobe and 13 other cell types or tissues"/>
</dbReference>
<dbReference type="GO" id="GO:0005737">
    <property type="term" value="C:cytoplasm"/>
    <property type="evidence" value="ECO:0000250"/>
    <property type="project" value="UniProtKB"/>
</dbReference>
<dbReference type="GO" id="GO:0005829">
    <property type="term" value="C:cytosol"/>
    <property type="evidence" value="ECO:0007669"/>
    <property type="project" value="UniProtKB-SubCell"/>
</dbReference>
<dbReference type="GO" id="GO:0005769">
    <property type="term" value="C:early endosome"/>
    <property type="evidence" value="ECO:0000250"/>
    <property type="project" value="UniProtKB"/>
</dbReference>
<dbReference type="GO" id="GO:0031901">
    <property type="term" value="C:early endosome membrane"/>
    <property type="evidence" value="ECO:0007669"/>
    <property type="project" value="UniProtKB-SubCell"/>
</dbReference>
<dbReference type="GO" id="GO:0032009">
    <property type="term" value="C:early phagosome"/>
    <property type="evidence" value="ECO:0000250"/>
    <property type="project" value="UniProtKB"/>
</dbReference>
<dbReference type="GO" id="GO:0005768">
    <property type="term" value="C:endosome"/>
    <property type="evidence" value="ECO:0000250"/>
    <property type="project" value="UniProtKB"/>
</dbReference>
<dbReference type="GO" id="GO:0042470">
    <property type="term" value="C:melanosome"/>
    <property type="evidence" value="ECO:0007669"/>
    <property type="project" value="UniProtKB-SubCell"/>
</dbReference>
<dbReference type="GO" id="GO:0045335">
    <property type="term" value="C:phagocytic vesicle"/>
    <property type="evidence" value="ECO:0000250"/>
    <property type="project" value="UniProtKB"/>
</dbReference>
<dbReference type="GO" id="GO:0030670">
    <property type="term" value="C:phagocytic vesicle membrane"/>
    <property type="evidence" value="ECO:0007669"/>
    <property type="project" value="UniProtKB-SubCell"/>
</dbReference>
<dbReference type="GO" id="GO:0005886">
    <property type="term" value="C:plasma membrane"/>
    <property type="evidence" value="ECO:0007669"/>
    <property type="project" value="UniProtKB-SubCell"/>
</dbReference>
<dbReference type="GO" id="GO:0001726">
    <property type="term" value="C:ruffle"/>
    <property type="evidence" value="ECO:0007669"/>
    <property type="project" value="UniProtKB-SubCell"/>
</dbReference>
<dbReference type="GO" id="GO:0003925">
    <property type="term" value="F:G protein activity"/>
    <property type="evidence" value="ECO:0007669"/>
    <property type="project" value="UniProtKB-EC"/>
</dbReference>
<dbReference type="GO" id="GO:0019003">
    <property type="term" value="F:GDP binding"/>
    <property type="evidence" value="ECO:0000250"/>
    <property type="project" value="UniProtKB"/>
</dbReference>
<dbReference type="GO" id="GO:0005525">
    <property type="term" value="F:GTP binding"/>
    <property type="evidence" value="ECO:0000250"/>
    <property type="project" value="UniProtKB"/>
</dbReference>
<dbReference type="GO" id="GO:0003924">
    <property type="term" value="F:GTPase activity"/>
    <property type="evidence" value="ECO:0000250"/>
    <property type="project" value="UniProtKB"/>
</dbReference>
<dbReference type="GO" id="GO:0006897">
    <property type="term" value="P:endocytosis"/>
    <property type="evidence" value="ECO:0000250"/>
    <property type="project" value="UniProtKB"/>
</dbReference>
<dbReference type="GO" id="GO:0006909">
    <property type="term" value="P:phagocytosis"/>
    <property type="evidence" value="ECO:0007669"/>
    <property type="project" value="UniProtKB-KW"/>
</dbReference>
<dbReference type="GO" id="GO:0015031">
    <property type="term" value="P:protein transport"/>
    <property type="evidence" value="ECO:0007669"/>
    <property type="project" value="UniProtKB-KW"/>
</dbReference>
<dbReference type="CDD" id="cd01860">
    <property type="entry name" value="Rab5_related"/>
    <property type="match status" value="1"/>
</dbReference>
<dbReference type="FunFam" id="3.40.50.300:FF:000180">
    <property type="entry name" value="Member RAS oncogene family"/>
    <property type="match status" value="1"/>
</dbReference>
<dbReference type="Gene3D" id="3.40.50.300">
    <property type="entry name" value="P-loop containing nucleotide triphosphate hydrolases"/>
    <property type="match status" value="1"/>
</dbReference>
<dbReference type="InterPro" id="IPR027417">
    <property type="entry name" value="P-loop_NTPase"/>
</dbReference>
<dbReference type="InterPro" id="IPR005225">
    <property type="entry name" value="Small_GTP-bd"/>
</dbReference>
<dbReference type="InterPro" id="IPR001806">
    <property type="entry name" value="Small_GTPase"/>
</dbReference>
<dbReference type="NCBIfam" id="TIGR00231">
    <property type="entry name" value="small_GTP"/>
    <property type="match status" value="1"/>
</dbReference>
<dbReference type="PANTHER" id="PTHR47978">
    <property type="match status" value="1"/>
</dbReference>
<dbReference type="Pfam" id="PF00071">
    <property type="entry name" value="Ras"/>
    <property type="match status" value="1"/>
</dbReference>
<dbReference type="PRINTS" id="PR00449">
    <property type="entry name" value="RASTRNSFRMNG"/>
</dbReference>
<dbReference type="SMART" id="SM00175">
    <property type="entry name" value="RAB"/>
    <property type="match status" value="1"/>
</dbReference>
<dbReference type="SMART" id="SM00176">
    <property type="entry name" value="RAN"/>
    <property type="match status" value="1"/>
</dbReference>
<dbReference type="SMART" id="SM00173">
    <property type="entry name" value="RAS"/>
    <property type="match status" value="1"/>
</dbReference>
<dbReference type="SMART" id="SM00174">
    <property type="entry name" value="RHO"/>
    <property type="match status" value="1"/>
</dbReference>
<dbReference type="SUPFAM" id="SSF52540">
    <property type="entry name" value="P-loop containing nucleoside triphosphate hydrolases"/>
    <property type="match status" value="1"/>
</dbReference>
<dbReference type="PROSITE" id="PS51419">
    <property type="entry name" value="RAB"/>
    <property type="match status" value="1"/>
</dbReference>
<feature type="chain" id="PRO_0000121105" description="Ras-related protein Rab-5A">
    <location>
        <begin position="1"/>
        <end position="215"/>
    </location>
</feature>
<feature type="region of interest" description="Disordered" evidence="5">
    <location>
        <begin position="181"/>
        <end position="215"/>
    </location>
</feature>
<feature type="short sequence motif" description="Switch 1" evidence="2">
    <location>
        <begin position="44"/>
        <end position="56"/>
    </location>
</feature>
<feature type="short sequence motif" description="Switch 2" evidence="2">
    <location>
        <begin position="77"/>
        <end position="93"/>
    </location>
</feature>
<feature type="compositionally biased region" description="Polar residues" evidence="5">
    <location>
        <begin position="203"/>
        <end position="215"/>
    </location>
</feature>
<feature type="binding site" evidence="2">
    <location>
        <position position="29"/>
    </location>
    <ligand>
        <name>GTP</name>
        <dbReference type="ChEBI" id="CHEBI:37565"/>
    </ligand>
</feature>
<feature type="binding site" evidence="2">
    <location>
        <position position="30"/>
    </location>
    <ligand>
        <name>GTP</name>
        <dbReference type="ChEBI" id="CHEBI:37565"/>
    </ligand>
</feature>
<feature type="binding site" evidence="2">
    <location>
        <position position="32"/>
    </location>
    <ligand>
        <name>GTP</name>
        <dbReference type="ChEBI" id="CHEBI:37565"/>
    </ligand>
</feature>
<feature type="binding site" evidence="2">
    <location>
        <position position="33"/>
    </location>
    <ligand>
        <name>GTP</name>
        <dbReference type="ChEBI" id="CHEBI:37565"/>
    </ligand>
</feature>
<feature type="binding site" evidence="2">
    <location>
        <position position="34"/>
    </location>
    <ligand>
        <name>GTP</name>
        <dbReference type="ChEBI" id="CHEBI:37565"/>
    </ligand>
</feature>
<feature type="binding site" evidence="2">
    <location>
        <position position="34"/>
    </location>
    <ligand>
        <name>Mg(2+)</name>
        <dbReference type="ChEBI" id="CHEBI:18420"/>
    </ligand>
</feature>
<feature type="binding site" evidence="2">
    <location>
        <position position="35"/>
    </location>
    <ligand>
        <name>GTP</name>
        <dbReference type="ChEBI" id="CHEBI:37565"/>
    </ligand>
</feature>
<feature type="binding site" evidence="2">
    <location>
        <position position="46"/>
    </location>
    <ligand>
        <name>GTP</name>
        <dbReference type="ChEBI" id="CHEBI:37565"/>
    </ligand>
</feature>
<feature type="binding site" evidence="2">
    <location>
        <position position="47"/>
    </location>
    <ligand>
        <name>GTP</name>
        <dbReference type="ChEBI" id="CHEBI:37565"/>
    </ligand>
</feature>
<feature type="binding site" evidence="2">
    <location>
        <position position="52"/>
    </location>
    <ligand>
        <name>GTP</name>
        <dbReference type="ChEBI" id="CHEBI:37565"/>
    </ligand>
</feature>
<feature type="binding site" evidence="2">
    <location>
        <position position="52"/>
    </location>
    <ligand>
        <name>Mg(2+)</name>
        <dbReference type="ChEBI" id="CHEBI:18420"/>
    </ligand>
</feature>
<feature type="binding site" evidence="2">
    <location>
        <position position="78"/>
    </location>
    <ligand>
        <name>GTP</name>
        <dbReference type="ChEBI" id="CHEBI:37565"/>
    </ligand>
</feature>
<feature type="binding site" evidence="2">
    <location>
        <position position="133"/>
    </location>
    <ligand>
        <name>GTP</name>
        <dbReference type="ChEBI" id="CHEBI:37565"/>
    </ligand>
</feature>
<feature type="binding site" evidence="2">
    <location>
        <position position="134"/>
    </location>
    <ligand>
        <name>GTP</name>
        <dbReference type="ChEBI" id="CHEBI:37565"/>
    </ligand>
</feature>
<feature type="binding site" evidence="2">
    <location>
        <position position="136"/>
    </location>
    <ligand>
        <name>GTP</name>
        <dbReference type="ChEBI" id="CHEBI:37565"/>
    </ligand>
</feature>
<feature type="binding site" evidence="2">
    <location>
        <position position="164"/>
    </location>
    <ligand>
        <name>GTP</name>
        <dbReference type="ChEBI" id="CHEBI:37565"/>
    </ligand>
</feature>
<feature type="binding site" evidence="2">
    <location>
        <position position="165"/>
    </location>
    <ligand>
        <name>GTP</name>
        <dbReference type="ChEBI" id="CHEBI:37565"/>
    </ligand>
</feature>
<feature type="modified residue" description="Phosphoserine" evidence="2">
    <location>
        <position position="84"/>
    </location>
</feature>
<feature type="lipid moiety-binding region" description="S-geranylgeranyl cysteine" evidence="2">
    <location>
        <position position="212"/>
    </location>
</feature>
<feature type="lipid moiety-binding region" description="S-geranylgeranyl cysteine" evidence="2">
    <location>
        <position position="213"/>
    </location>
</feature>
<protein>
    <recommendedName>
        <fullName>Ras-related protein Rab-5A</fullName>
        <ecNumber evidence="2">3.6.5.2</ecNumber>
    </recommendedName>
</protein>